<accession>Q8BS03</accession>
<accession>Q3TN14</accession>
<accession>Q99MM7</accession>
<reference key="1">
    <citation type="journal article" date="2001" name="Mech. Dev.">
        <title>Cloning and expression of a novel cysteine-rich secreted protein family member expressed in thyroid and pancreatic mesoderm within the chicken embryo.</title>
        <authorList>
            <person name="Smith D.M."/>
            <person name="Collins-Racie L.A."/>
            <person name="Marigo V.A."/>
            <person name="Roberts D.J."/>
            <person name="Davis N.M."/>
            <person name="Hartmann C."/>
            <person name="Schweitzer R."/>
            <person name="LaVallie E.R."/>
            <person name="Gamer L."/>
            <person name="McCoy J."/>
            <person name="Tabin C.J."/>
        </authorList>
    </citation>
    <scope>NUCLEOTIDE SEQUENCE [MRNA]</scope>
    <scope>TISSUE SPECIFICITY</scope>
</reference>
<reference key="2">
    <citation type="journal article" date="2005" name="Science">
        <title>The transcriptional landscape of the mammalian genome.</title>
        <authorList>
            <person name="Carninci P."/>
            <person name="Kasukawa T."/>
            <person name="Katayama S."/>
            <person name="Gough J."/>
            <person name="Frith M.C."/>
            <person name="Maeda N."/>
            <person name="Oyama R."/>
            <person name="Ravasi T."/>
            <person name="Lenhard B."/>
            <person name="Wells C."/>
            <person name="Kodzius R."/>
            <person name="Shimokawa K."/>
            <person name="Bajic V.B."/>
            <person name="Brenner S.E."/>
            <person name="Batalov S."/>
            <person name="Forrest A.R."/>
            <person name="Zavolan M."/>
            <person name="Davis M.J."/>
            <person name="Wilming L.G."/>
            <person name="Aidinis V."/>
            <person name="Allen J.E."/>
            <person name="Ambesi-Impiombato A."/>
            <person name="Apweiler R."/>
            <person name="Aturaliya R.N."/>
            <person name="Bailey T.L."/>
            <person name="Bansal M."/>
            <person name="Baxter L."/>
            <person name="Beisel K.W."/>
            <person name="Bersano T."/>
            <person name="Bono H."/>
            <person name="Chalk A.M."/>
            <person name="Chiu K.P."/>
            <person name="Choudhary V."/>
            <person name="Christoffels A."/>
            <person name="Clutterbuck D.R."/>
            <person name="Crowe M.L."/>
            <person name="Dalla E."/>
            <person name="Dalrymple B.P."/>
            <person name="de Bono B."/>
            <person name="Della Gatta G."/>
            <person name="di Bernardo D."/>
            <person name="Down T."/>
            <person name="Engstrom P."/>
            <person name="Fagiolini M."/>
            <person name="Faulkner G."/>
            <person name="Fletcher C.F."/>
            <person name="Fukushima T."/>
            <person name="Furuno M."/>
            <person name="Futaki S."/>
            <person name="Gariboldi M."/>
            <person name="Georgii-Hemming P."/>
            <person name="Gingeras T.R."/>
            <person name="Gojobori T."/>
            <person name="Green R.E."/>
            <person name="Gustincich S."/>
            <person name="Harbers M."/>
            <person name="Hayashi Y."/>
            <person name="Hensch T.K."/>
            <person name="Hirokawa N."/>
            <person name="Hill D."/>
            <person name="Huminiecki L."/>
            <person name="Iacono M."/>
            <person name="Ikeo K."/>
            <person name="Iwama A."/>
            <person name="Ishikawa T."/>
            <person name="Jakt M."/>
            <person name="Kanapin A."/>
            <person name="Katoh M."/>
            <person name="Kawasawa Y."/>
            <person name="Kelso J."/>
            <person name="Kitamura H."/>
            <person name="Kitano H."/>
            <person name="Kollias G."/>
            <person name="Krishnan S.P."/>
            <person name="Kruger A."/>
            <person name="Kummerfeld S.K."/>
            <person name="Kurochkin I.V."/>
            <person name="Lareau L.F."/>
            <person name="Lazarevic D."/>
            <person name="Lipovich L."/>
            <person name="Liu J."/>
            <person name="Liuni S."/>
            <person name="McWilliam S."/>
            <person name="Madan Babu M."/>
            <person name="Madera M."/>
            <person name="Marchionni L."/>
            <person name="Matsuda H."/>
            <person name="Matsuzawa S."/>
            <person name="Miki H."/>
            <person name="Mignone F."/>
            <person name="Miyake S."/>
            <person name="Morris K."/>
            <person name="Mottagui-Tabar S."/>
            <person name="Mulder N."/>
            <person name="Nakano N."/>
            <person name="Nakauchi H."/>
            <person name="Ng P."/>
            <person name="Nilsson R."/>
            <person name="Nishiguchi S."/>
            <person name="Nishikawa S."/>
            <person name="Nori F."/>
            <person name="Ohara O."/>
            <person name="Okazaki Y."/>
            <person name="Orlando V."/>
            <person name="Pang K.C."/>
            <person name="Pavan W.J."/>
            <person name="Pavesi G."/>
            <person name="Pesole G."/>
            <person name="Petrovsky N."/>
            <person name="Piazza S."/>
            <person name="Reed J."/>
            <person name="Reid J.F."/>
            <person name="Ring B.Z."/>
            <person name="Ringwald M."/>
            <person name="Rost B."/>
            <person name="Ruan Y."/>
            <person name="Salzberg S.L."/>
            <person name="Sandelin A."/>
            <person name="Schneider C."/>
            <person name="Schoenbach C."/>
            <person name="Sekiguchi K."/>
            <person name="Semple C.A."/>
            <person name="Seno S."/>
            <person name="Sessa L."/>
            <person name="Sheng Y."/>
            <person name="Shibata Y."/>
            <person name="Shimada H."/>
            <person name="Shimada K."/>
            <person name="Silva D."/>
            <person name="Sinclair B."/>
            <person name="Sperling S."/>
            <person name="Stupka E."/>
            <person name="Sugiura K."/>
            <person name="Sultana R."/>
            <person name="Takenaka Y."/>
            <person name="Taki K."/>
            <person name="Tammoja K."/>
            <person name="Tan S.L."/>
            <person name="Tang S."/>
            <person name="Taylor M.S."/>
            <person name="Tegner J."/>
            <person name="Teichmann S.A."/>
            <person name="Ueda H.R."/>
            <person name="van Nimwegen E."/>
            <person name="Verardo R."/>
            <person name="Wei C.L."/>
            <person name="Yagi K."/>
            <person name="Yamanishi H."/>
            <person name="Zabarovsky E."/>
            <person name="Zhu S."/>
            <person name="Zimmer A."/>
            <person name="Hide W."/>
            <person name="Bult C."/>
            <person name="Grimmond S.M."/>
            <person name="Teasdale R.D."/>
            <person name="Liu E.T."/>
            <person name="Brusic V."/>
            <person name="Quackenbush J."/>
            <person name="Wahlestedt C."/>
            <person name="Mattick J.S."/>
            <person name="Hume D.A."/>
            <person name="Kai C."/>
            <person name="Sasaki D."/>
            <person name="Tomaru Y."/>
            <person name="Fukuda S."/>
            <person name="Kanamori-Katayama M."/>
            <person name="Suzuki M."/>
            <person name="Aoki J."/>
            <person name="Arakawa T."/>
            <person name="Iida J."/>
            <person name="Imamura K."/>
            <person name="Itoh M."/>
            <person name="Kato T."/>
            <person name="Kawaji H."/>
            <person name="Kawagashira N."/>
            <person name="Kawashima T."/>
            <person name="Kojima M."/>
            <person name="Kondo S."/>
            <person name="Konno H."/>
            <person name="Nakano K."/>
            <person name="Ninomiya N."/>
            <person name="Nishio T."/>
            <person name="Okada M."/>
            <person name="Plessy C."/>
            <person name="Shibata K."/>
            <person name="Shiraki T."/>
            <person name="Suzuki S."/>
            <person name="Tagami M."/>
            <person name="Waki K."/>
            <person name="Watahiki A."/>
            <person name="Okamura-Oho Y."/>
            <person name="Suzuki H."/>
            <person name="Kawai J."/>
            <person name="Hayashizaki Y."/>
        </authorList>
    </citation>
    <scope>NUCLEOTIDE SEQUENCE [LARGE SCALE MRNA]</scope>
    <source>
        <strain>C57BL/6J</strain>
        <tissue>Aorta</tissue>
        <tissue>Colon</tissue>
        <tissue>Vein</tissue>
    </source>
</reference>
<reference key="3">
    <citation type="journal article" date="2004" name="Genome Res.">
        <title>The status, quality, and expansion of the NIH full-length cDNA project: the Mammalian Gene Collection (MGC).</title>
        <authorList>
            <consortium name="The MGC Project Team"/>
        </authorList>
    </citation>
    <scope>NUCLEOTIDE SEQUENCE [LARGE SCALE MRNA]</scope>
</reference>
<evidence type="ECO:0000250" key="1">
    <source>
        <dbReference type="UniProtKB" id="O43692"/>
    </source>
</evidence>
<evidence type="ECO:0000250" key="2">
    <source>
        <dbReference type="UniProtKB" id="Q98ST6"/>
    </source>
</evidence>
<evidence type="ECO:0000255" key="3"/>
<evidence type="ECO:0000269" key="4">
    <source>
    </source>
</evidence>
<evidence type="ECO:0000305" key="5"/>
<proteinExistence type="evidence at transcript level"/>
<organism>
    <name type="scientific">Mus musculus</name>
    <name type="common">Mouse</name>
    <dbReference type="NCBI Taxonomy" id="10090"/>
    <lineage>
        <taxon>Eukaryota</taxon>
        <taxon>Metazoa</taxon>
        <taxon>Chordata</taxon>
        <taxon>Craniata</taxon>
        <taxon>Vertebrata</taxon>
        <taxon>Euteleostomi</taxon>
        <taxon>Mammalia</taxon>
        <taxon>Eutheria</taxon>
        <taxon>Euarchontoglires</taxon>
        <taxon>Glires</taxon>
        <taxon>Rodentia</taxon>
        <taxon>Myomorpha</taxon>
        <taxon>Muroidea</taxon>
        <taxon>Muridae</taxon>
        <taxon>Murinae</taxon>
        <taxon>Mus</taxon>
        <taxon>Mus</taxon>
    </lineage>
</organism>
<protein>
    <recommendedName>
        <fullName>Peptidase inhibitor 15</fullName>
        <shortName>PI-15</shortName>
    </recommendedName>
    <alternativeName>
        <fullName>SugarCrisp</fullName>
    </alternativeName>
</protein>
<comment type="function">
    <text evidence="1 2">Serine protease inhibitor which displays weak inhibitory activity against trypsin (By similarity). May play a role in facial patterning during embryonic development (By similarity).</text>
</comment>
<comment type="subcellular location">
    <subcellularLocation>
        <location evidence="1">Secreted</location>
    </subcellularLocation>
</comment>
<comment type="tissue specificity">
    <text evidence="4">Weakly expressed. Expressed at low level in prostate, mammary gland, salivary gland and thyroid gland.</text>
</comment>
<comment type="PTM">
    <text evidence="1">N-glycosylated.</text>
</comment>
<comment type="similarity">
    <text evidence="5">Belongs to the CRISP family.</text>
</comment>
<comment type="sequence caution" evidence="5">
    <conflict type="erroneous initiation">
        <sequence resource="EMBL-CDS" id="BAC30762"/>
    </conflict>
</comment>
<feature type="signal peptide" evidence="3">
    <location>
        <begin position="1"/>
        <end position="21"/>
    </location>
</feature>
<feature type="propeptide" id="PRO_0000287624" evidence="1">
    <location>
        <begin position="22"/>
        <end position="60"/>
    </location>
</feature>
<feature type="chain" id="PRO_0000287625" description="Peptidase inhibitor 15">
    <location>
        <begin position="61"/>
        <end position="258"/>
    </location>
</feature>
<feature type="domain" description="SCP">
    <location>
        <begin position="71"/>
        <end position="211"/>
    </location>
</feature>
<feature type="glycosylation site" description="N-linked (GlcNAc...) asparagine" evidence="3">
    <location>
        <position position="36"/>
    </location>
</feature>
<feature type="glycosylation site" description="N-linked (GlcNAc...) asparagine" evidence="3">
    <location>
        <position position="124"/>
    </location>
</feature>
<feature type="sequence conflict" description="In Ref. 2; BAE38275." evidence="5" ref="2">
    <original>S</original>
    <variation>R</variation>
    <location>
        <position position="50"/>
    </location>
</feature>
<feature type="sequence conflict" description="In Ref. 2; BAE38275." evidence="5" ref="2">
    <original>D</original>
    <variation>V</variation>
    <location>
        <position position="52"/>
    </location>
</feature>
<sequence>MIMNSAVSLVILLSLLCEAHTVVLLNPTDSSLPANNFTDTEAALSTPLESADIPKARRKRYISQNDMIAILDYHNQVRGKVFPPAANMEYMVWDENLAKSAEAWAATCIWDHGPSYLLRFLGQNLSVRTGRYRSILQLVKPWYDEVKDYAFPYPQDCNPRCPMRCFGPMCTHYTQMVWATSNRIGCAIHTCQNMNVWGSVWRRAVYLVCNYAPKGNWIGEAPYKVGVPCSSCPPSYGGACTDNLCFPGVTTNYLYWFK</sequence>
<dbReference type="EMBL" id="AF329196">
    <property type="protein sequence ID" value="AAK16494.1"/>
    <property type="molecule type" value="mRNA"/>
</dbReference>
<dbReference type="EMBL" id="AK040961">
    <property type="protein sequence ID" value="BAC30762.1"/>
    <property type="status" value="ALT_INIT"/>
    <property type="molecule type" value="mRNA"/>
</dbReference>
<dbReference type="EMBL" id="AK165584">
    <property type="protein sequence ID" value="BAE38275.1"/>
    <property type="molecule type" value="mRNA"/>
</dbReference>
<dbReference type="EMBL" id="BC116705">
    <property type="protein sequence ID" value="AAI16706.2"/>
    <property type="molecule type" value="mRNA"/>
</dbReference>
<dbReference type="CCDS" id="CCDS48225.1"/>
<dbReference type="RefSeq" id="NP_444421.3">
    <property type="nucleotide sequence ID" value="NM_053191.5"/>
</dbReference>
<dbReference type="SMR" id="Q8BS03"/>
<dbReference type="FunCoup" id="Q8BS03">
    <property type="interactions" value="101"/>
</dbReference>
<dbReference type="STRING" id="10090.ENSMUSP00000085826"/>
<dbReference type="GlyCosmos" id="Q8BS03">
    <property type="glycosylation" value="2 sites, No reported glycans"/>
</dbReference>
<dbReference type="GlyGen" id="Q8BS03">
    <property type="glycosylation" value="2 sites"/>
</dbReference>
<dbReference type="PhosphoSitePlus" id="Q8BS03"/>
<dbReference type="PaxDb" id="10090-ENSMUSP00000085826"/>
<dbReference type="ProteomicsDB" id="289415"/>
<dbReference type="DNASU" id="94227"/>
<dbReference type="Ensembl" id="ENSMUST00000088476.5">
    <property type="protein sequence ID" value="ENSMUSP00000085826.4"/>
    <property type="gene ID" value="ENSMUSG00000067780.4"/>
</dbReference>
<dbReference type="GeneID" id="94227"/>
<dbReference type="KEGG" id="mmu:94227"/>
<dbReference type="UCSC" id="uc007ake.2">
    <property type="organism name" value="mouse"/>
</dbReference>
<dbReference type="AGR" id="MGI:1934659"/>
<dbReference type="CTD" id="51050"/>
<dbReference type="MGI" id="MGI:1934659">
    <property type="gene designation" value="Pi15"/>
</dbReference>
<dbReference type="eggNOG" id="KOG3017">
    <property type="taxonomic scope" value="Eukaryota"/>
</dbReference>
<dbReference type="GeneTree" id="ENSGT00940000158635"/>
<dbReference type="InParanoid" id="Q8BS03"/>
<dbReference type="OrthoDB" id="414826at2759"/>
<dbReference type="PhylomeDB" id="Q8BS03"/>
<dbReference type="TreeFam" id="TF316148"/>
<dbReference type="BioGRID-ORCS" id="94227">
    <property type="hits" value="1 hit in 79 CRISPR screens"/>
</dbReference>
<dbReference type="PRO" id="PR:Q8BS03"/>
<dbReference type="Proteomes" id="UP000000589">
    <property type="component" value="Chromosome 1"/>
</dbReference>
<dbReference type="RNAct" id="Q8BS03">
    <property type="molecule type" value="protein"/>
</dbReference>
<dbReference type="GO" id="GO:0005576">
    <property type="term" value="C:extracellular region"/>
    <property type="evidence" value="ECO:0007669"/>
    <property type="project" value="UniProtKB-SubCell"/>
</dbReference>
<dbReference type="GO" id="GO:0030414">
    <property type="term" value="F:peptidase inhibitor activity"/>
    <property type="evidence" value="ECO:0007669"/>
    <property type="project" value="UniProtKB-KW"/>
</dbReference>
<dbReference type="CDD" id="cd18814">
    <property type="entry name" value="CAP_PI15"/>
    <property type="match status" value="1"/>
</dbReference>
<dbReference type="FunFam" id="3.40.33.10:FF:000003">
    <property type="entry name" value="Peptidase inhibitor 15"/>
    <property type="match status" value="1"/>
</dbReference>
<dbReference type="Gene3D" id="3.40.33.10">
    <property type="entry name" value="CAP"/>
    <property type="match status" value="1"/>
</dbReference>
<dbReference type="InterPro" id="IPR018244">
    <property type="entry name" value="Allrgn_V5/Tpx1_CS"/>
</dbReference>
<dbReference type="InterPro" id="IPR014044">
    <property type="entry name" value="CAP_dom"/>
</dbReference>
<dbReference type="InterPro" id="IPR035940">
    <property type="entry name" value="CAP_sf"/>
</dbReference>
<dbReference type="InterPro" id="IPR001283">
    <property type="entry name" value="CRISP-related"/>
</dbReference>
<dbReference type="InterPro" id="IPR047832">
    <property type="entry name" value="PI15_CAP"/>
</dbReference>
<dbReference type="PANTHER" id="PTHR10334">
    <property type="entry name" value="CYSTEINE-RICH SECRETORY PROTEIN-RELATED"/>
    <property type="match status" value="1"/>
</dbReference>
<dbReference type="Pfam" id="PF00188">
    <property type="entry name" value="CAP"/>
    <property type="match status" value="1"/>
</dbReference>
<dbReference type="PRINTS" id="PR00837">
    <property type="entry name" value="V5TPXLIKE"/>
</dbReference>
<dbReference type="SMART" id="SM00198">
    <property type="entry name" value="SCP"/>
    <property type="match status" value="1"/>
</dbReference>
<dbReference type="SUPFAM" id="SSF55797">
    <property type="entry name" value="PR-1-like"/>
    <property type="match status" value="1"/>
</dbReference>
<dbReference type="PROSITE" id="PS01010">
    <property type="entry name" value="CRISP_2"/>
    <property type="match status" value="1"/>
</dbReference>
<gene>
    <name type="primary">Pi15</name>
</gene>
<name>PI15_MOUSE</name>
<keyword id="KW-0217">Developmental protein</keyword>
<keyword id="KW-0325">Glycoprotein</keyword>
<keyword id="KW-0646">Protease inhibitor</keyword>
<keyword id="KW-1185">Reference proteome</keyword>
<keyword id="KW-0964">Secreted</keyword>
<keyword id="KW-0732">Signal</keyword>